<accession>A5I4Z4</accession>
<accession>A7G660</accession>
<gene>
    <name type="ordered locus">CBO2563</name>
    <name type="ordered locus">CLC_2434</name>
</gene>
<reference key="1">
    <citation type="journal article" date="2007" name="Genome Res.">
        <title>Genome sequence of a proteolytic (Group I) Clostridium botulinum strain Hall A and comparative analysis of the clostridial genomes.</title>
        <authorList>
            <person name="Sebaihia M."/>
            <person name="Peck M.W."/>
            <person name="Minton N.P."/>
            <person name="Thomson N.R."/>
            <person name="Holden M.T.G."/>
            <person name="Mitchell W.J."/>
            <person name="Carter A.T."/>
            <person name="Bentley S.D."/>
            <person name="Mason D.R."/>
            <person name="Crossman L."/>
            <person name="Paul C.J."/>
            <person name="Ivens A."/>
            <person name="Wells-Bennik M.H.J."/>
            <person name="Davis I.J."/>
            <person name="Cerdeno-Tarraga A.M."/>
            <person name="Churcher C."/>
            <person name="Quail M.A."/>
            <person name="Chillingworth T."/>
            <person name="Feltwell T."/>
            <person name="Fraser A."/>
            <person name="Goodhead I."/>
            <person name="Hance Z."/>
            <person name="Jagels K."/>
            <person name="Larke N."/>
            <person name="Maddison M."/>
            <person name="Moule S."/>
            <person name="Mungall K."/>
            <person name="Norbertczak H."/>
            <person name="Rabbinowitsch E."/>
            <person name="Sanders M."/>
            <person name="Simmonds M."/>
            <person name="White B."/>
            <person name="Whithead S."/>
            <person name="Parkhill J."/>
        </authorList>
    </citation>
    <scope>NUCLEOTIDE SEQUENCE [LARGE SCALE GENOMIC DNA]</scope>
    <source>
        <strain>Hall / ATCC 3502 / NCTC 13319 / Type A</strain>
    </source>
</reference>
<reference key="2">
    <citation type="journal article" date="2007" name="PLoS ONE">
        <title>Analysis of the neurotoxin complex genes in Clostridium botulinum A1-A4 and B1 strains: BoNT/A3, /Ba4 and /B1 clusters are located within plasmids.</title>
        <authorList>
            <person name="Smith T.J."/>
            <person name="Hill K.K."/>
            <person name="Foley B.T."/>
            <person name="Detter J.C."/>
            <person name="Munk A.C."/>
            <person name="Bruce D.C."/>
            <person name="Doggett N.A."/>
            <person name="Smith L.A."/>
            <person name="Marks J.D."/>
            <person name="Xie G."/>
            <person name="Brettin T.S."/>
        </authorList>
    </citation>
    <scope>NUCLEOTIDE SEQUENCE [LARGE SCALE GENOMIC DNA]</scope>
    <source>
        <strain>Hall / ATCC 3502 / NCTC 13319 / Type A</strain>
    </source>
</reference>
<feature type="chain" id="PRO_0000315249" description="UPF0297 protein CBO2563/CLC_2434">
    <location>
        <begin position="1"/>
        <end position="83"/>
    </location>
</feature>
<protein>
    <recommendedName>
        <fullName evidence="1">UPF0297 protein CBO2563/CLC_2434</fullName>
    </recommendedName>
</protein>
<organism>
    <name type="scientific">Clostridium botulinum (strain Hall / ATCC 3502 / NCTC 13319 / Type A)</name>
    <dbReference type="NCBI Taxonomy" id="441771"/>
    <lineage>
        <taxon>Bacteria</taxon>
        <taxon>Bacillati</taxon>
        <taxon>Bacillota</taxon>
        <taxon>Clostridia</taxon>
        <taxon>Eubacteriales</taxon>
        <taxon>Clostridiaceae</taxon>
        <taxon>Clostridium</taxon>
    </lineage>
</organism>
<evidence type="ECO:0000255" key="1">
    <source>
        <dbReference type="HAMAP-Rule" id="MF_01507"/>
    </source>
</evidence>
<sequence length="83" mass="9411">MSGDKTIQFDPVENKKTLTKEILTKVYNSLLEKGYNPVNQLVGYLISGDPTYITNYNGARSLVIKLERDEILEEVIKSYLGIN</sequence>
<name>Y2563_CLOBH</name>
<keyword id="KW-1185">Reference proteome</keyword>
<comment type="similarity">
    <text evidence="1">Belongs to the UPF0297 family.</text>
</comment>
<dbReference type="EMBL" id="CP000727">
    <property type="protein sequence ID" value="ABS36367.1"/>
    <property type="molecule type" value="Genomic_DNA"/>
</dbReference>
<dbReference type="EMBL" id="AM412317">
    <property type="protein sequence ID" value="CAL84121.1"/>
    <property type="molecule type" value="Genomic_DNA"/>
</dbReference>
<dbReference type="RefSeq" id="WP_003385813.1">
    <property type="nucleotide sequence ID" value="NC_009698.1"/>
</dbReference>
<dbReference type="RefSeq" id="YP_001255059.1">
    <property type="nucleotide sequence ID" value="NC_009495.1"/>
</dbReference>
<dbReference type="RefSeq" id="YP_001388275.1">
    <property type="nucleotide sequence ID" value="NC_009698.1"/>
</dbReference>
<dbReference type="SMR" id="A5I4Z4"/>
<dbReference type="KEGG" id="cbh:CLC_2434"/>
<dbReference type="KEGG" id="cbo:CBO2563"/>
<dbReference type="PATRIC" id="fig|413999.7.peg.2542"/>
<dbReference type="HOGENOM" id="CLU_162466_0_0_9"/>
<dbReference type="PRO" id="PR:A5I4Z4"/>
<dbReference type="Proteomes" id="UP000001986">
    <property type="component" value="Chromosome"/>
</dbReference>
<dbReference type="HAMAP" id="MF_01507">
    <property type="entry name" value="UPF0297"/>
    <property type="match status" value="1"/>
</dbReference>
<dbReference type="InterPro" id="IPR009309">
    <property type="entry name" value="IreB"/>
</dbReference>
<dbReference type="NCBIfam" id="NF003997">
    <property type="entry name" value="PRK05473.1"/>
    <property type="match status" value="1"/>
</dbReference>
<dbReference type="PANTHER" id="PTHR40067">
    <property type="entry name" value="UPF0297 PROTEIN YRZL"/>
    <property type="match status" value="1"/>
</dbReference>
<dbReference type="PANTHER" id="PTHR40067:SF1">
    <property type="entry name" value="UPF0297 PROTEIN YRZL"/>
    <property type="match status" value="1"/>
</dbReference>
<dbReference type="Pfam" id="PF06135">
    <property type="entry name" value="IreB"/>
    <property type="match status" value="1"/>
</dbReference>
<dbReference type="PIRSF" id="PIRSF037258">
    <property type="entry name" value="DUF965_bac"/>
    <property type="match status" value="1"/>
</dbReference>
<proteinExistence type="inferred from homology"/>